<gene>
    <name evidence="1" type="primary">efp</name>
    <name type="ordered locus">Jann_3254</name>
</gene>
<dbReference type="EMBL" id="CP000264">
    <property type="protein sequence ID" value="ABD56171.1"/>
    <property type="molecule type" value="Genomic_DNA"/>
</dbReference>
<dbReference type="RefSeq" id="WP_011456373.1">
    <property type="nucleotide sequence ID" value="NC_007802.1"/>
</dbReference>
<dbReference type="SMR" id="Q28M91"/>
<dbReference type="STRING" id="290400.Jann_3254"/>
<dbReference type="KEGG" id="jan:Jann_3254"/>
<dbReference type="eggNOG" id="COG0231">
    <property type="taxonomic scope" value="Bacteria"/>
</dbReference>
<dbReference type="HOGENOM" id="CLU_074944_1_1_5"/>
<dbReference type="OrthoDB" id="9801844at2"/>
<dbReference type="UniPathway" id="UPA00345"/>
<dbReference type="Proteomes" id="UP000008326">
    <property type="component" value="Chromosome"/>
</dbReference>
<dbReference type="GO" id="GO:0005737">
    <property type="term" value="C:cytoplasm"/>
    <property type="evidence" value="ECO:0007669"/>
    <property type="project" value="UniProtKB-SubCell"/>
</dbReference>
<dbReference type="GO" id="GO:0003746">
    <property type="term" value="F:translation elongation factor activity"/>
    <property type="evidence" value="ECO:0007669"/>
    <property type="project" value="UniProtKB-UniRule"/>
</dbReference>
<dbReference type="GO" id="GO:0043043">
    <property type="term" value="P:peptide biosynthetic process"/>
    <property type="evidence" value="ECO:0007669"/>
    <property type="project" value="InterPro"/>
</dbReference>
<dbReference type="CDD" id="cd04470">
    <property type="entry name" value="S1_EF-P_repeat_1"/>
    <property type="match status" value="1"/>
</dbReference>
<dbReference type="CDD" id="cd05794">
    <property type="entry name" value="S1_EF-P_repeat_2"/>
    <property type="match status" value="1"/>
</dbReference>
<dbReference type="FunFam" id="2.30.30.30:FF:000003">
    <property type="entry name" value="Elongation factor P"/>
    <property type="match status" value="1"/>
</dbReference>
<dbReference type="FunFam" id="2.40.50.140:FF:000004">
    <property type="entry name" value="Elongation factor P"/>
    <property type="match status" value="1"/>
</dbReference>
<dbReference type="FunFam" id="2.40.50.140:FF:000009">
    <property type="entry name" value="Elongation factor P"/>
    <property type="match status" value="1"/>
</dbReference>
<dbReference type="Gene3D" id="2.30.30.30">
    <property type="match status" value="1"/>
</dbReference>
<dbReference type="Gene3D" id="2.40.50.140">
    <property type="entry name" value="Nucleic acid-binding proteins"/>
    <property type="match status" value="2"/>
</dbReference>
<dbReference type="HAMAP" id="MF_00141">
    <property type="entry name" value="EF_P"/>
    <property type="match status" value="1"/>
</dbReference>
<dbReference type="InterPro" id="IPR015365">
    <property type="entry name" value="Elong-fact-P_C"/>
</dbReference>
<dbReference type="InterPro" id="IPR012340">
    <property type="entry name" value="NA-bd_OB-fold"/>
</dbReference>
<dbReference type="InterPro" id="IPR014722">
    <property type="entry name" value="Rib_uL2_dom2"/>
</dbReference>
<dbReference type="InterPro" id="IPR020599">
    <property type="entry name" value="Transl_elong_fac_P/YeiP"/>
</dbReference>
<dbReference type="InterPro" id="IPR013185">
    <property type="entry name" value="Transl_elong_KOW-like"/>
</dbReference>
<dbReference type="InterPro" id="IPR001059">
    <property type="entry name" value="Transl_elong_P/YeiP_cen"/>
</dbReference>
<dbReference type="InterPro" id="IPR013852">
    <property type="entry name" value="Transl_elong_P/YeiP_CS"/>
</dbReference>
<dbReference type="InterPro" id="IPR011768">
    <property type="entry name" value="Transl_elongation_fac_P"/>
</dbReference>
<dbReference type="InterPro" id="IPR008991">
    <property type="entry name" value="Translation_prot_SH3-like_sf"/>
</dbReference>
<dbReference type="NCBIfam" id="TIGR00038">
    <property type="entry name" value="efp"/>
    <property type="match status" value="1"/>
</dbReference>
<dbReference type="NCBIfam" id="NF001810">
    <property type="entry name" value="PRK00529.1"/>
    <property type="match status" value="1"/>
</dbReference>
<dbReference type="PANTHER" id="PTHR30053">
    <property type="entry name" value="ELONGATION FACTOR P"/>
    <property type="match status" value="1"/>
</dbReference>
<dbReference type="PANTHER" id="PTHR30053:SF14">
    <property type="entry name" value="TRANSLATION ELONGATION FACTOR KOW-LIKE DOMAIN-CONTAINING PROTEIN"/>
    <property type="match status" value="1"/>
</dbReference>
<dbReference type="Pfam" id="PF01132">
    <property type="entry name" value="EFP"/>
    <property type="match status" value="1"/>
</dbReference>
<dbReference type="Pfam" id="PF08207">
    <property type="entry name" value="EFP_N"/>
    <property type="match status" value="1"/>
</dbReference>
<dbReference type="Pfam" id="PF09285">
    <property type="entry name" value="Elong-fact-P_C"/>
    <property type="match status" value="1"/>
</dbReference>
<dbReference type="PIRSF" id="PIRSF005901">
    <property type="entry name" value="EF-P"/>
    <property type="match status" value="1"/>
</dbReference>
<dbReference type="SMART" id="SM01185">
    <property type="entry name" value="EFP"/>
    <property type="match status" value="1"/>
</dbReference>
<dbReference type="SMART" id="SM00841">
    <property type="entry name" value="Elong-fact-P_C"/>
    <property type="match status" value="1"/>
</dbReference>
<dbReference type="SUPFAM" id="SSF50249">
    <property type="entry name" value="Nucleic acid-binding proteins"/>
    <property type="match status" value="2"/>
</dbReference>
<dbReference type="SUPFAM" id="SSF50104">
    <property type="entry name" value="Translation proteins SH3-like domain"/>
    <property type="match status" value="1"/>
</dbReference>
<dbReference type="PROSITE" id="PS01275">
    <property type="entry name" value="EFP"/>
    <property type="match status" value="1"/>
</dbReference>
<name>EFP_JANSC</name>
<accession>Q28M91</accession>
<sequence>MPKINGNEIRPGNVLEHNGGLWAAVKVDHVKPGKGGAFAQVELRNLRNGSKLNERFRSADKVERVRLEQKDQQFLYESDGMLVFMDAETYEQIELPAELLGERRPFLQDGMTIVVEFHDDEALNASLPQKVVCKVVETEPVVKGQTAANSFKPAILDNGVKVMVPPFVGQDEDIVVNTETMDYSERA</sequence>
<proteinExistence type="inferred from homology"/>
<organism>
    <name type="scientific">Jannaschia sp. (strain CCS1)</name>
    <dbReference type="NCBI Taxonomy" id="290400"/>
    <lineage>
        <taxon>Bacteria</taxon>
        <taxon>Pseudomonadati</taxon>
        <taxon>Pseudomonadota</taxon>
        <taxon>Alphaproteobacteria</taxon>
        <taxon>Rhodobacterales</taxon>
        <taxon>Roseobacteraceae</taxon>
        <taxon>Jannaschia</taxon>
    </lineage>
</organism>
<feature type="chain" id="PRO_1000010764" description="Elongation factor P">
    <location>
        <begin position="1"/>
        <end position="187"/>
    </location>
</feature>
<keyword id="KW-0963">Cytoplasm</keyword>
<keyword id="KW-0251">Elongation factor</keyword>
<keyword id="KW-0648">Protein biosynthesis</keyword>
<keyword id="KW-1185">Reference proteome</keyword>
<comment type="function">
    <text evidence="1">Involved in peptide bond synthesis. Stimulates efficient translation and peptide-bond synthesis on native or reconstituted 70S ribosomes in vitro. Probably functions indirectly by altering the affinity of the ribosome for aminoacyl-tRNA, thus increasing their reactivity as acceptors for peptidyl transferase.</text>
</comment>
<comment type="pathway">
    <text evidence="1">Protein biosynthesis; polypeptide chain elongation.</text>
</comment>
<comment type="subcellular location">
    <subcellularLocation>
        <location evidence="1">Cytoplasm</location>
    </subcellularLocation>
</comment>
<comment type="similarity">
    <text evidence="1">Belongs to the elongation factor P family.</text>
</comment>
<reference key="1">
    <citation type="submission" date="2006-02" db="EMBL/GenBank/DDBJ databases">
        <title>Complete sequence of chromosome of Jannaschia sp. CCS1.</title>
        <authorList>
            <consortium name="US DOE Joint Genome Institute"/>
            <person name="Copeland A."/>
            <person name="Lucas S."/>
            <person name="Lapidus A."/>
            <person name="Barry K."/>
            <person name="Detter J.C."/>
            <person name="Glavina del Rio T."/>
            <person name="Hammon N."/>
            <person name="Israni S."/>
            <person name="Pitluck S."/>
            <person name="Brettin T."/>
            <person name="Bruce D."/>
            <person name="Han C."/>
            <person name="Tapia R."/>
            <person name="Gilna P."/>
            <person name="Chertkov O."/>
            <person name="Saunders E."/>
            <person name="Schmutz J."/>
            <person name="Larimer F."/>
            <person name="Land M."/>
            <person name="Kyrpides N."/>
            <person name="Lykidis A."/>
            <person name="Moran M.A."/>
            <person name="Belas R."/>
            <person name="Ye W."/>
            <person name="Buchan A."/>
            <person name="Gonzalez J.M."/>
            <person name="Schell M.A."/>
            <person name="Richardson P."/>
        </authorList>
    </citation>
    <scope>NUCLEOTIDE SEQUENCE [LARGE SCALE GENOMIC DNA]</scope>
    <source>
        <strain>CCS1</strain>
    </source>
</reference>
<protein>
    <recommendedName>
        <fullName evidence="1">Elongation factor P</fullName>
        <shortName evidence="1">EF-P</shortName>
    </recommendedName>
</protein>
<evidence type="ECO:0000255" key="1">
    <source>
        <dbReference type="HAMAP-Rule" id="MF_00141"/>
    </source>
</evidence>